<protein>
    <recommendedName>
        <fullName evidence="1">Large ribosomal subunit protein uL24</fullName>
    </recommendedName>
    <alternativeName>
        <fullName evidence="2">50S ribosomal protein L24</fullName>
    </alternativeName>
</protein>
<keyword id="KW-0687">Ribonucleoprotein</keyword>
<keyword id="KW-0689">Ribosomal protein</keyword>
<keyword id="KW-0694">RNA-binding</keyword>
<keyword id="KW-0699">rRNA-binding</keyword>
<reference key="1">
    <citation type="submission" date="2009-07" db="EMBL/GenBank/DDBJ databases">
        <title>Complete sequence of Pectobacterium carotovorum subsp. carotovorum PC1.</title>
        <authorList>
            <consortium name="US DOE Joint Genome Institute"/>
            <person name="Lucas S."/>
            <person name="Copeland A."/>
            <person name="Lapidus A."/>
            <person name="Glavina del Rio T."/>
            <person name="Tice H."/>
            <person name="Bruce D."/>
            <person name="Goodwin L."/>
            <person name="Pitluck S."/>
            <person name="Munk A.C."/>
            <person name="Brettin T."/>
            <person name="Detter J.C."/>
            <person name="Han C."/>
            <person name="Tapia R."/>
            <person name="Larimer F."/>
            <person name="Land M."/>
            <person name="Hauser L."/>
            <person name="Kyrpides N."/>
            <person name="Mikhailova N."/>
            <person name="Balakrishnan V."/>
            <person name="Glasner J."/>
            <person name="Perna N.T."/>
        </authorList>
    </citation>
    <scope>NUCLEOTIDE SEQUENCE [LARGE SCALE GENOMIC DNA]</scope>
    <source>
        <strain>PC1</strain>
    </source>
</reference>
<evidence type="ECO:0000255" key="1">
    <source>
        <dbReference type="HAMAP-Rule" id="MF_01326"/>
    </source>
</evidence>
<evidence type="ECO:0000305" key="2"/>
<comment type="function">
    <text evidence="1">One of two assembly initiator proteins, it binds directly to the 5'-end of the 23S rRNA, where it nucleates assembly of the 50S subunit.</text>
</comment>
<comment type="function">
    <text evidence="1">One of the proteins that surrounds the polypeptide exit tunnel on the outside of the subunit.</text>
</comment>
<comment type="subunit">
    <text evidence="1">Part of the 50S ribosomal subunit.</text>
</comment>
<comment type="similarity">
    <text evidence="1">Belongs to the universal ribosomal protein uL24 family.</text>
</comment>
<organism>
    <name type="scientific">Pectobacterium carotovorum subsp. carotovorum (strain PC1)</name>
    <dbReference type="NCBI Taxonomy" id="561230"/>
    <lineage>
        <taxon>Bacteria</taxon>
        <taxon>Pseudomonadati</taxon>
        <taxon>Pseudomonadota</taxon>
        <taxon>Gammaproteobacteria</taxon>
        <taxon>Enterobacterales</taxon>
        <taxon>Pectobacteriaceae</taxon>
        <taxon>Pectobacterium</taxon>
    </lineage>
</organism>
<name>RL24_PECCP</name>
<dbReference type="EMBL" id="CP001657">
    <property type="protein sequence ID" value="ACT14826.1"/>
    <property type="molecule type" value="Genomic_DNA"/>
</dbReference>
<dbReference type="RefSeq" id="WP_015841924.1">
    <property type="nucleotide sequence ID" value="NC_012917.1"/>
</dbReference>
<dbReference type="SMR" id="C6DG63"/>
<dbReference type="STRING" id="561230.PC1_3811"/>
<dbReference type="GeneID" id="70909314"/>
<dbReference type="KEGG" id="pct:PC1_3811"/>
<dbReference type="eggNOG" id="COG0198">
    <property type="taxonomic scope" value="Bacteria"/>
</dbReference>
<dbReference type="HOGENOM" id="CLU_093315_2_2_6"/>
<dbReference type="OrthoDB" id="9807419at2"/>
<dbReference type="Proteomes" id="UP000002736">
    <property type="component" value="Chromosome"/>
</dbReference>
<dbReference type="GO" id="GO:1990904">
    <property type="term" value="C:ribonucleoprotein complex"/>
    <property type="evidence" value="ECO:0007669"/>
    <property type="project" value="UniProtKB-KW"/>
</dbReference>
<dbReference type="GO" id="GO:0005840">
    <property type="term" value="C:ribosome"/>
    <property type="evidence" value="ECO:0007669"/>
    <property type="project" value="UniProtKB-KW"/>
</dbReference>
<dbReference type="GO" id="GO:0019843">
    <property type="term" value="F:rRNA binding"/>
    <property type="evidence" value="ECO:0007669"/>
    <property type="project" value="UniProtKB-UniRule"/>
</dbReference>
<dbReference type="GO" id="GO:0003735">
    <property type="term" value="F:structural constituent of ribosome"/>
    <property type="evidence" value="ECO:0007669"/>
    <property type="project" value="InterPro"/>
</dbReference>
<dbReference type="GO" id="GO:0006412">
    <property type="term" value="P:translation"/>
    <property type="evidence" value="ECO:0007669"/>
    <property type="project" value="UniProtKB-UniRule"/>
</dbReference>
<dbReference type="CDD" id="cd06089">
    <property type="entry name" value="KOW_RPL26"/>
    <property type="match status" value="1"/>
</dbReference>
<dbReference type="FunFam" id="2.30.30.30:FF:000004">
    <property type="entry name" value="50S ribosomal protein L24"/>
    <property type="match status" value="1"/>
</dbReference>
<dbReference type="Gene3D" id="2.30.30.30">
    <property type="match status" value="1"/>
</dbReference>
<dbReference type="HAMAP" id="MF_01326_B">
    <property type="entry name" value="Ribosomal_uL24_B"/>
    <property type="match status" value="1"/>
</dbReference>
<dbReference type="InterPro" id="IPR005824">
    <property type="entry name" value="KOW"/>
</dbReference>
<dbReference type="InterPro" id="IPR014722">
    <property type="entry name" value="Rib_uL2_dom2"/>
</dbReference>
<dbReference type="InterPro" id="IPR003256">
    <property type="entry name" value="Ribosomal_uL24"/>
</dbReference>
<dbReference type="InterPro" id="IPR005825">
    <property type="entry name" value="Ribosomal_uL24_CS"/>
</dbReference>
<dbReference type="InterPro" id="IPR041988">
    <property type="entry name" value="Ribosomal_uL24_KOW"/>
</dbReference>
<dbReference type="InterPro" id="IPR008991">
    <property type="entry name" value="Translation_prot_SH3-like_sf"/>
</dbReference>
<dbReference type="NCBIfam" id="TIGR01079">
    <property type="entry name" value="rplX_bact"/>
    <property type="match status" value="1"/>
</dbReference>
<dbReference type="PANTHER" id="PTHR12903">
    <property type="entry name" value="MITOCHONDRIAL RIBOSOMAL PROTEIN L24"/>
    <property type="match status" value="1"/>
</dbReference>
<dbReference type="Pfam" id="PF00467">
    <property type="entry name" value="KOW"/>
    <property type="match status" value="1"/>
</dbReference>
<dbReference type="Pfam" id="PF17136">
    <property type="entry name" value="ribosomal_L24"/>
    <property type="match status" value="1"/>
</dbReference>
<dbReference type="SMART" id="SM00739">
    <property type="entry name" value="KOW"/>
    <property type="match status" value="1"/>
</dbReference>
<dbReference type="SUPFAM" id="SSF50104">
    <property type="entry name" value="Translation proteins SH3-like domain"/>
    <property type="match status" value="1"/>
</dbReference>
<dbReference type="PROSITE" id="PS01108">
    <property type="entry name" value="RIBOSOMAL_L24"/>
    <property type="match status" value="1"/>
</dbReference>
<gene>
    <name evidence="1" type="primary">rplX</name>
    <name type="ordered locus">PC1_3811</name>
</gene>
<accession>C6DG63</accession>
<proteinExistence type="inferred from homology"/>
<feature type="chain" id="PRO_1000214552" description="Large ribosomal subunit protein uL24">
    <location>
        <begin position="1"/>
        <end position="104"/>
    </location>
</feature>
<sequence>MAAKIRRDDEVIVLTGKDKGKRGKVKNVLSASKVIVEGINLVKKHQKPVPALNQPGGIVEKEAAIQVSNVAIFNAATGKADRVGFRFEDGKKVRFFKSNSETIK</sequence>